<reference key="1">
    <citation type="journal article" date="2004" name="PLoS Biol.">
        <title>Phylogenomics of the reproductive parasite Wolbachia pipientis wMel: a streamlined genome overrun by mobile genetic elements.</title>
        <authorList>
            <person name="Wu M."/>
            <person name="Sun L.V."/>
            <person name="Vamathevan J.J."/>
            <person name="Riegler M."/>
            <person name="DeBoy R.T."/>
            <person name="Brownlie J.C."/>
            <person name="McGraw E.A."/>
            <person name="Martin W."/>
            <person name="Esser C."/>
            <person name="Ahmadinejad N."/>
            <person name="Wiegand C."/>
            <person name="Madupu R."/>
            <person name="Beanan M.J."/>
            <person name="Brinkac L.M."/>
            <person name="Daugherty S.C."/>
            <person name="Durkin A.S."/>
            <person name="Kolonay J.F."/>
            <person name="Nelson W.C."/>
            <person name="Mohamoud Y."/>
            <person name="Lee P."/>
            <person name="Berry K.J."/>
            <person name="Young M.B."/>
            <person name="Utterback T.R."/>
            <person name="Weidman J.F."/>
            <person name="Nierman W.C."/>
            <person name="Paulsen I.T."/>
            <person name="Nelson K.E."/>
            <person name="Tettelin H."/>
            <person name="O'Neill S.L."/>
            <person name="Eisen J.A."/>
        </authorList>
    </citation>
    <scope>NUCLEOTIDE SEQUENCE [LARGE SCALE GENOMIC DNA]</scope>
</reference>
<evidence type="ECO:0000255" key="1">
    <source>
        <dbReference type="HAMAP-Rule" id="MF_01309"/>
    </source>
</evidence>
<evidence type="ECO:0000305" key="2"/>
<dbReference type="EMBL" id="AE017196">
    <property type="protein sequence ID" value="AAS14373.1"/>
    <property type="molecule type" value="Genomic_DNA"/>
</dbReference>
<dbReference type="RefSeq" id="WP_010962753.1">
    <property type="nucleotide sequence ID" value="NZ_OX384529.1"/>
</dbReference>
<dbReference type="SMR" id="Q73H92"/>
<dbReference type="EnsemblBacteria" id="AAS14373">
    <property type="protein sequence ID" value="AAS14373"/>
    <property type="gene ID" value="WD_0675"/>
</dbReference>
<dbReference type="GeneID" id="70036158"/>
<dbReference type="KEGG" id="wol:WD_0675"/>
<dbReference type="eggNOG" id="COG0092">
    <property type="taxonomic scope" value="Bacteria"/>
</dbReference>
<dbReference type="Proteomes" id="UP000008215">
    <property type="component" value="Chromosome"/>
</dbReference>
<dbReference type="GO" id="GO:0022627">
    <property type="term" value="C:cytosolic small ribosomal subunit"/>
    <property type="evidence" value="ECO:0007669"/>
    <property type="project" value="TreeGrafter"/>
</dbReference>
<dbReference type="GO" id="GO:0003729">
    <property type="term" value="F:mRNA binding"/>
    <property type="evidence" value="ECO:0007669"/>
    <property type="project" value="UniProtKB-UniRule"/>
</dbReference>
<dbReference type="GO" id="GO:0019843">
    <property type="term" value="F:rRNA binding"/>
    <property type="evidence" value="ECO:0007669"/>
    <property type="project" value="UniProtKB-UniRule"/>
</dbReference>
<dbReference type="GO" id="GO:0003735">
    <property type="term" value="F:structural constituent of ribosome"/>
    <property type="evidence" value="ECO:0007669"/>
    <property type="project" value="InterPro"/>
</dbReference>
<dbReference type="GO" id="GO:0006412">
    <property type="term" value="P:translation"/>
    <property type="evidence" value="ECO:0007669"/>
    <property type="project" value="UniProtKB-UniRule"/>
</dbReference>
<dbReference type="CDD" id="cd02412">
    <property type="entry name" value="KH-II_30S_S3"/>
    <property type="match status" value="1"/>
</dbReference>
<dbReference type="FunFam" id="3.30.1140.32:FF:000002">
    <property type="entry name" value="30S ribosomal protein S3"/>
    <property type="match status" value="1"/>
</dbReference>
<dbReference type="FunFam" id="3.30.300.20:FF:000001">
    <property type="entry name" value="30S ribosomal protein S3"/>
    <property type="match status" value="1"/>
</dbReference>
<dbReference type="Gene3D" id="3.30.300.20">
    <property type="match status" value="1"/>
</dbReference>
<dbReference type="Gene3D" id="3.30.1140.32">
    <property type="entry name" value="Ribosomal protein S3, C-terminal domain"/>
    <property type="match status" value="1"/>
</dbReference>
<dbReference type="HAMAP" id="MF_01309_B">
    <property type="entry name" value="Ribosomal_uS3_B"/>
    <property type="match status" value="1"/>
</dbReference>
<dbReference type="InterPro" id="IPR004087">
    <property type="entry name" value="KH_dom"/>
</dbReference>
<dbReference type="InterPro" id="IPR015946">
    <property type="entry name" value="KH_dom-like_a/b"/>
</dbReference>
<dbReference type="InterPro" id="IPR004044">
    <property type="entry name" value="KH_dom_type_2"/>
</dbReference>
<dbReference type="InterPro" id="IPR009019">
    <property type="entry name" value="KH_sf_prok-type"/>
</dbReference>
<dbReference type="InterPro" id="IPR036419">
    <property type="entry name" value="Ribosomal_S3_C_sf"/>
</dbReference>
<dbReference type="InterPro" id="IPR005704">
    <property type="entry name" value="Ribosomal_uS3_bac-typ"/>
</dbReference>
<dbReference type="InterPro" id="IPR001351">
    <property type="entry name" value="Ribosomal_uS3_C"/>
</dbReference>
<dbReference type="InterPro" id="IPR018280">
    <property type="entry name" value="Ribosomal_uS3_CS"/>
</dbReference>
<dbReference type="NCBIfam" id="TIGR01009">
    <property type="entry name" value="rpsC_bact"/>
    <property type="match status" value="1"/>
</dbReference>
<dbReference type="PANTHER" id="PTHR11760">
    <property type="entry name" value="30S/40S RIBOSOMAL PROTEIN S3"/>
    <property type="match status" value="1"/>
</dbReference>
<dbReference type="PANTHER" id="PTHR11760:SF19">
    <property type="entry name" value="SMALL RIBOSOMAL SUBUNIT PROTEIN US3C"/>
    <property type="match status" value="1"/>
</dbReference>
<dbReference type="Pfam" id="PF07650">
    <property type="entry name" value="KH_2"/>
    <property type="match status" value="1"/>
</dbReference>
<dbReference type="Pfam" id="PF00189">
    <property type="entry name" value="Ribosomal_S3_C"/>
    <property type="match status" value="1"/>
</dbReference>
<dbReference type="SMART" id="SM00322">
    <property type="entry name" value="KH"/>
    <property type="match status" value="1"/>
</dbReference>
<dbReference type="SUPFAM" id="SSF54814">
    <property type="entry name" value="Prokaryotic type KH domain (KH-domain type II)"/>
    <property type="match status" value="1"/>
</dbReference>
<dbReference type="SUPFAM" id="SSF54821">
    <property type="entry name" value="Ribosomal protein S3 C-terminal domain"/>
    <property type="match status" value="1"/>
</dbReference>
<dbReference type="PROSITE" id="PS50823">
    <property type="entry name" value="KH_TYPE_2"/>
    <property type="match status" value="1"/>
</dbReference>
<dbReference type="PROSITE" id="PS00548">
    <property type="entry name" value="RIBOSOMAL_S3"/>
    <property type="match status" value="1"/>
</dbReference>
<accession>Q73H92</accession>
<protein>
    <recommendedName>
        <fullName evidence="1">Small ribosomal subunit protein uS3</fullName>
    </recommendedName>
    <alternativeName>
        <fullName evidence="2">30S ribosomal protein S3</fullName>
    </alternativeName>
</protein>
<keyword id="KW-0687">Ribonucleoprotein</keyword>
<keyword id="KW-0689">Ribosomal protein</keyword>
<keyword id="KW-0694">RNA-binding</keyword>
<keyword id="KW-0699">rRNA-binding</keyword>
<proteinExistence type="inferred from homology"/>
<name>RS3_WOLPM</name>
<gene>
    <name evidence="1" type="primary">rpsC</name>
    <name type="ordered locus">WD_0675</name>
</gene>
<comment type="function">
    <text evidence="1">Binds the lower part of the 30S subunit head. Binds mRNA in the 70S ribosome, positioning it for translation.</text>
</comment>
<comment type="subunit">
    <text evidence="1">Part of the 30S ribosomal subunit. Forms a tight complex with proteins S10 and S14.</text>
</comment>
<comment type="similarity">
    <text evidence="1">Belongs to the universal ribosomal protein uS3 family.</text>
</comment>
<organism>
    <name type="scientific">Wolbachia pipientis wMel</name>
    <dbReference type="NCBI Taxonomy" id="163164"/>
    <lineage>
        <taxon>Bacteria</taxon>
        <taxon>Pseudomonadati</taxon>
        <taxon>Pseudomonadota</taxon>
        <taxon>Alphaproteobacteria</taxon>
        <taxon>Rickettsiales</taxon>
        <taxon>Anaplasmataceae</taxon>
        <taxon>Wolbachieae</taxon>
        <taxon>Wolbachia</taxon>
    </lineage>
</organism>
<feature type="chain" id="PRO_0000130235" description="Small ribosomal subunit protein uS3">
    <location>
        <begin position="1"/>
        <end position="204"/>
    </location>
</feature>
<feature type="domain" description="KH type-2" evidence="1">
    <location>
        <begin position="37"/>
        <end position="105"/>
    </location>
</feature>
<sequence length="204" mass="22826">MGNVNPKGFRLKIINTWSSIWYAEKGYKQGLHQDLSIRSYINESFKHAGVSKVIIERTIDLVSVIIHSSRPGVIIGKKGSDIEKIKQKIAEKVKNNVEVNVVGVKRSEIDAVLISNSIAQQLEKRVSFRRAMKKAIQSCLRMGARGIKVSCSGRLGGAEIARTEWYKEGRLPLHTLRANIDYAFAEAKTIYGIIGVKVWVYIGN</sequence>